<feature type="chain" id="PRO_0000309937" description="Large ribosomal subunit protein uL2">
    <location>
        <begin position="1"/>
        <end position="278"/>
    </location>
</feature>
<feature type="region of interest" description="Disordered" evidence="2">
    <location>
        <begin position="223"/>
        <end position="278"/>
    </location>
</feature>
<feature type="compositionally biased region" description="Basic residues" evidence="2">
    <location>
        <begin position="255"/>
        <end position="264"/>
    </location>
</feature>
<name>RL2_LACP3</name>
<sequence length="278" mass="30337">MAIIKYKPTSNGRRNMSGSDFAEITKTKPEKTLLVSQSHTAGRNAHGHITVRHRGGGHKQFYRVIDFKRNKDGMAATVKAIEYDPNRTANIALLHYEDGVKSYILAPKGLKVGDKVYSGEDVDIKVGNSLQLKNIPAGTTIHNIELKPGKGAQLARSAGVSAQLLGKDNDKYVTVKLASGEVRLILAENRATIGAVGNEQHELISIGKAGRKRWLGFRPTVRGSVMNPNDHPHGGGEGKAPIGHPSPMSPWGKKTLGKKTRDHKAKSEKFIVRHRRAK</sequence>
<proteinExistence type="inferred from homology"/>
<gene>
    <name evidence="1" type="primary">rplB</name>
    <name type="ordered locus">LSEI_2500</name>
</gene>
<dbReference type="EMBL" id="CP000423">
    <property type="protein sequence ID" value="ABJ71236.1"/>
    <property type="molecule type" value="Genomic_DNA"/>
</dbReference>
<dbReference type="RefSeq" id="WP_003576419.1">
    <property type="nucleotide sequence ID" value="NC_008526.1"/>
</dbReference>
<dbReference type="RefSeq" id="YP_807678.1">
    <property type="nucleotide sequence ID" value="NC_008526.1"/>
</dbReference>
<dbReference type="SMR" id="Q034Y6"/>
<dbReference type="STRING" id="321967.LSEI_2500"/>
<dbReference type="PaxDb" id="321967-LSEI_2500"/>
<dbReference type="KEGG" id="lca:LSEI_2500"/>
<dbReference type="PATRIC" id="fig|321967.11.peg.2454"/>
<dbReference type="HOGENOM" id="CLU_036235_2_1_9"/>
<dbReference type="Proteomes" id="UP000001651">
    <property type="component" value="Chromosome"/>
</dbReference>
<dbReference type="GO" id="GO:0015934">
    <property type="term" value="C:large ribosomal subunit"/>
    <property type="evidence" value="ECO:0007669"/>
    <property type="project" value="InterPro"/>
</dbReference>
<dbReference type="GO" id="GO:0019843">
    <property type="term" value="F:rRNA binding"/>
    <property type="evidence" value="ECO:0007669"/>
    <property type="project" value="UniProtKB-UniRule"/>
</dbReference>
<dbReference type="GO" id="GO:0003735">
    <property type="term" value="F:structural constituent of ribosome"/>
    <property type="evidence" value="ECO:0007669"/>
    <property type="project" value="InterPro"/>
</dbReference>
<dbReference type="GO" id="GO:0016740">
    <property type="term" value="F:transferase activity"/>
    <property type="evidence" value="ECO:0007669"/>
    <property type="project" value="InterPro"/>
</dbReference>
<dbReference type="GO" id="GO:0002181">
    <property type="term" value="P:cytoplasmic translation"/>
    <property type="evidence" value="ECO:0007669"/>
    <property type="project" value="TreeGrafter"/>
</dbReference>
<dbReference type="FunFam" id="2.30.30.30:FF:000001">
    <property type="entry name" value="50S ribosomal protein L2"/>
    <property type="match status" value="1"/>
</dbReference>
<dbReference type="FunFam" id="2.40.50.140:FF:000003">
    <property type="entry name" value="50S ribosomal protein L2"/>
    <property type="match status" value="1"/>
</dbReference>
<dbReference type="FunFam" id="4.10.950.10:FF:000001">
    <property type="entry name" value="50S ribosomal protein L2"/>
    <property type="match status" value="1"/>
</dbReference>
<dbReference type="Gene3D" id="2.30.30.30">
    <property type="match status" value="1"/>
</dbReference>
<dbReference type="Gene3D" id="2.40.50.140">
    <property type="entry name" value="Nucleic acid-binding proteins"/>
    <property type="match status" value="1"/>
</dbReference>
<dbReference type="Gene3D" id="4.10.950.10">
    <property type="entry name" value="Ribosomal protein L2, domain 3"/>
    <property type="match status" value="1"/>
</dbReference>
<dbReference type="HAMAP" id="MF_01320_B">
    <property type="entry name" value="Ribosomal_uL2_B"/>
    <property type="match status" value="1"/>
</dbReference>
<dbReference type="InterPro" id="IPR012340">
    <property type="entry name" value="NA-bd_OB-fold"/>
</dbReference>
<dbReference type="InterPro" id="IPR014722">
    <property type="entry name" value="Rib_uL2_dom2"/>
</dbReference>
<dbReference type="InterPro" id="IPR002171">
    <property type="entry name" value="Ribosomal_uL2"/>
</dbReference>
<dbReference type="InterPro" id="IPR005880">
    <property type="entry name" value="Ribosomal_uL2_bac/org-type"/>
</dbReference>
<dbReference type="InterPro" id="IPR022669">
    <property type="entry name" value="Ribosomal_uL2_C"/>
</dbReference>
<dbReference type="InterPro" id="IPR022671">
    <property type="entry name" value="Ribosomal_uL2_CS"/>
</dbReference>
<dbReference type="InterPro" id="IPR014726">
    <property type="entry name" value="Ribosomal_uL2_dom3"/>
</dbReference>
<dbReference type="InterPro" id="IPR022666">
    <property type="entry name" value="Ribosomal_uL2_RNA-bd_dom"/>
</dbReference>
<dbReference type="InterPro" id="IPR008991">
    <property type="entry name" value="Translation_prot_SH3-like_sf"/>
</dbReference>
<dbReference type="NCBIfam" id="TIGR01171">
    <property type="entry name" value="rplB_bact"/>
    <property type="match status" value="1"/>
</dbReference>
<dbReference type="PANTHER" id="PTHR13691:SF5">
    <property type="entry name" value="LARGE RIBOSOMAL SUBUNIT PROTEIN UL2M"/>
    <property type="match status" value="1"/>
</dbReference>
<dbReference type="PANTHER" id="PTHR13691">
    <property type="entry name" value="RIBOSOMAL PROTEIN L2"/>
    <property type="match status" value="1"/>
</dbReference>
<dbReference type="Pfam" id="PF00181">
    <property type="entry name" value="Ribosomal_L2"/>
    <property type="match status" value="1"/>
</dbReference>
<dbReference type="Pfam" id="PF03947">
    <property type="entry name" value="Ribosomal_L2_C"/>
    <property type="match status" value="1"/>
</dbReference>
<dbReference type="PIRSF" id="PIRSF002158">
    <property type="entry name" value="Ribosomal_L2"/>
    <property type="match status" value="1"/>
</dbReference>
<dbReference type="SMART" id="SM01383">
    <property type="entry name" value="Ribosomal_L2"/>
    <property type="match status" value="1"/>
</dbReference>
<dbReference type="SMART" id="SM01382">
    <property type="entry name" value="Ribosomal_L2_C"/>
    <property type="match status" value="1"/>
</dbReference>
<dbReference type="SUPFAM" id="SSF50249">
    <property type="entry name" value="Nucleic acid-binding proteins"/>
    <property type="match status" value="1"/>
</dbReference>
<dbReference type="SUPFAM" id="SSF50104">
    <property type="entry name" value="Translation proteins SH3-like domain"/>
    <property type="match status" value="1"/>
</dbReference>
<dbReference type="PROSITE" id="PS00467">
    <property type="entry name" value="RIBOSOMAL_L2"/>
    <property type="match status" value="1"/>
</dbReference>
<accession>Q034Y6</accession>
<comment type="function">
    <text evidence="1">One of the primary rRNA binding proteins. Required for association of the 30S and 50S subunits to form the 70S ribosome, for tRNA binding and peptide bond formation. It has been suggested to have peptidyltransferase activity; this is somewhat controversial. Makes several contacts with the 16S rRNA in the 70S ribosome.</text>
</comment>
<comment type="subunit">
    <text evidence="1">Part of the 50S ribosomal subunit. Forms a bridge to the 30S subunit in the 70S ribosome.</text>
</comment>
<comment type="similarity">
    <text evidence="1">Belongs to the universal ribosomal protein uL2 family.</text>
</comment>
<protein>
    <recommendedName>
        <fullName evidence="1">Large ribosomal subunit protein uL2</fullName>
    </recommendedName>
    <alternativeName>
        <fullName evidence="3">50S ribosomal protein L2</fullName>
    </alternativeName>
</protein>
<organism>
    <name type="scientific">Lacticaseibacillus paracasei (strain ATCC 334 / BCRC 17002 / CCUG 31169 / CIP 107868 / KCTC 3260 / NRRL B-441)</name>
    <name type="common">Lactobacillus paracasei</name>
    <dbReference type="NCBI Taxonomy" id="321967"/>
    <lineage>
        <taxon>Bacteria</taxon>
        <taxon>Bacillati</taxon>
        <taxon>Bacillota</taxon>
        <taxon>Bacilli</taxon>
        <taxon>Lactobacillales</taxon>
        <taxon>Lactobacillaceae</taxon>
        <taxon>Lacticaseibacillus</taxon>
    </lineage>
</organism>
<evidence type="ECO:0000255" key="1">
    <source>
        <dbReference type="HAMAP-Rule" id="MF_01320"/>
    </source>
</evidence>
<evidence type="ECO:0000256" key="2">
    <source>
        <dbReference type="SAM" id="MobiDB-lite"/>
    </source>
</evidence>
<evidence type="ECO:0000305" key="3"/>
<reference key="1">
    <citation type="journal article" date="2006" name="Proc. Natl. Acad. Sci. U.S.A.">
        <title>Comparative genomics of the lactic acid bacteria.</title>
        <authorList>
            <person name="Makarova K.S."/>
            <person name="Slesarev A."/>
            <person name="Wolf Y.I."/>
            <person name="Sorokin A."/>
            <person name="Mirkin B."/>
            <person name="Koonin E.V."/>
            <person name="Pavlov A."/>
            <person name="Pavlova N."/>
            <person name="Karamychev V."/>
            <person name="Polouchine N."/>
            <person name="Shakhova V."/>
            <person name="Grigoriev I."/>
            <person name="Lou Y."/>
            <person name="Rohksar D."/>
            <person name="Lucas S."/>
            <person name="Huang K."/>
            <person name="Goodstein D.M."/>
            <person name="Hawkins T."/>
            <person name="Plengvidhya V."/>
            <person name="Welker D."/>
            <person name="Hughes J."/>
            <person name="Goh Y."/>
            <person name="Benson A."/>
            <person name="Baldwin K."/>
            <person name="Lee J.-H."/>
            <person name="Diaz-Muniz I."/>
            <person name="Dosti B."/>
            <person name="Smeianov V."/>
            <person name="Wechter W."/>
            <person name="Barabote R."/>
            <person name="Lorca G."/>
            <person name="Altermann E."/>
            <person name="Barrangou R."/>
            <person name="Ganesan B."/>
            <person name="Xie Y."/>
            <person name="Rawsthorne H."/>
            <person name="Tamir D."/>
            <person name="Parker C."/>
            <person name="Breidt F."/>
            <person name="Broadbent J.R."/>
            <person name="Hutkins R."/>
            <person name="O'Sullivan D."/>
            <person name="Steele J."/>
            <person name="Unlu G."/>
            <person name="Saier M.H. Jr."/>
            <person name="Klaenhammer T."/>
            <person name="Richardson P."/>
            <person name="Kozyavkin S."/>
            <person name="Weimer B.C."/>
            <person name="Mills D.A."/>
        </authorList>
    </citation>
    <scope>NUCLEOTIDE SEQUENCE [LARGE SCALE GENOMIC DNA]</scope>
    <source>
        <strain>ATCC 334 / BCRC 17002 / CCUG 31169 / CIP 107868 / KCTC 3260 / NRRL B-441</strain>
    </source>
</reference>
<keyword id="KW-1185">Reference proteome</keyword>
<keyword id="KW-0687">Ribonucleoprotein</keyword>
<keyword id="KW-0689">Ribosomal protein</keyword>
<keyword id="KW-0694">RNA-binding</keyword>
<keyword id="KW-0699">rRNA-binding</keyword>